<organism>
    <name type="scientific">Ectopseudomonas mendocina (strain ymp)</name>
    <name type="common">Pseudomonas mendocina</name>
    <dbReference type="NCBI Taxonomy" id="399739"/>
    <lineage>
        <taxon>Bacteria</taxon>
        <taxon>Pseudomonadati</taxon>
        <taxon>Pseudomonadota</taxon>
        <taxon>Gammaproteobacteria</taxon>
        <taxon>Pseudomonadales</taxon>
        <taxon>Pseudomonadaceae</taxon>
        <taxon>Ectopseudomonas</taxon>
    </lineage>
</organism>
<name>IHFB_ECTM1</name>
<feature type="chain" id="PRO_1000060634" description="Integration host factor subunit beta">
    <location>
        <begin position="1"/>
        <end position="95"/>
    </location>
</feature>
<feature type="region of interest" description="Disordered" evidence="2">
    <location>
        <begin position="59"/>
        <end position="95"/>
    </location>
</feature>
<feature type="compositionally biased region" description="Basic and acidic residues" evidence="2">
    <location>
        <begin position="72"/>
        <end position="95"/>
    </location>
</feature>
<accession>A4XTF3</accession>
<dbReference type="EMBL" id="CP000680">
    <property type="protein sequence ID" value="ABP84619.1"/>
    <property type="molecule type" value="Genomic_DNA"/>
</dbReference>
<dbReference type="SMR" id="A4XTF3"/>
<dbReference type="STRING" id="399739.Pmen_1855"/>
<dbReference type="KEGG" id="pmy:Pmen_1855"/>
<dbReference type="PATRIC" id="fig|399739.8.peg.1886"/>
<dbReference type="eggNOG" id="COG0776">
    <property type="taxonomic scope" value="Bacteria"/>
</dbReference>
<dbReference type="HOGENOM" id="CLU_105066_2_0_6"/>
<dbReference type="OrthoDB" id="9804203at2"/>
<dbReference type="GO" id="GO:0005694">
    <property type="term" value="C:chromosome"/>
    <property type="evidence" value="ECO:0007669"/>
    <property type="project" value="InterPro"/>
</dbReference>
<dbReference type="GO" id="GO:0005829">
    <property type="term" value="C:cytosol"/>
    <property type="evidence" value="ECO:0007669"/>
    <property type="project" value="TreeGrafter"/>
</dbReference>
<dbReference type="GO" id="GO:0003677">
    <property type="term" value="F:DNA binding"/>
    <property type="evidence" value="ECO:0007669"/>
    <property type="project" value="UniProtKB-UniRule"/>
</dbReference>
<dbReference type="GO" id="GO:0030527">
    <property type="term" value="F:structural constituent of chromatin"/>
    <property type="evidence" value="ECO:0007669"/>
    <property type="project" value="InterPro"/>
</dbReference>
<dbReference type="GO" id="GO:0006310">
    <property type="term" value="P:DNA recombination"/>
    <property type="evidence" value="ECO:0007669"/>
    <property type="project" value="UniProtKB-UniRule"/>
</dbReference>
<dbReference type="GO" id="GO:0006355">
    <property type="term" value="P:regulation of DNA-templated transcription"/>
    <property type="evidence" value="ECO:0007669"/>
    <property type="project" value="UniProtKB-UniRule"/>
</dbReference>
<dbReference type="GO" id="GO:0006417">
    <property type="term" value="P:regulation of translation"/>
    <property type="evidence" value="ECO:0007669"/>
    <property type="project" value="UniProtKB-UniRule"/>
</dbReference>
<dbReference type="CDD" id="cd13836">
    <property type="entry name" value="IHF_B"/>
    <property type="match status" value="1"/>
</dbReference>
<dbReference type="FunFam" id="4.10.520.10:FF:000003">
    <property type="entry name" value="Integration host factor subunit beta"/>
    <property type="match status" value="1"/>
</dbReference>
<dbReference type="Gene3D" id="4.10.520.10">
    <property type="entry name" value="IHF-like DNA-binding proteins"/>
    <property type="match status" value="1"/>
</dbReference>
<dbReference type="HAMAP" id="MF_00381">
    <property type="entry name" value="IHF_beta"/>
    <property type="match status" value="1"/>
</dbReference>
<dbReference type="InterPro" id="IPR000119">
    <property type="entry name" value="Hist_DNA-bd"/>
</dbReference>
<dbReference type="InterPro" id="IPR020816">
    <property type="entry name" value="Histone-like_DNA-bd_CS"/>
</dbReference>
<dbReference type="InterPro" id="IPR010992">
    <property type="entry name" value="IHF-like_DNA-bd_dom_sf"/>
</dbReference>
<dbReference type="InterPro" id="IPR005685">
    <property type="entry name" value="IHF_beta"/>
</dbReference>
<dbReference type="NCBIfam" id="TIGR00988">
    <property type="entry name" value="hip"/>
    <property type="match status" value="1"/>
</dbReference>
<dbReference type="NCBIfam" id="NF001222">
    <property type="entry name" value="PRK00199.1"/>
    <property type="match status" value="1"/>
</dbReference>
<dbReference type="PANTHER" id="PTHR33175">
    <property type="entry name" value="DNA-BINDING PROTEIN HU"/>
    <property type="match status" value="1"/>
</dbReference>
<dbReference type="PANTHER" id="PTHR33175:SF5">
    <property type="entry name" value="INTEGRATION HOST FACTOR SUBUNIT BETA"/>
    <property type="match status" value="1"/>
</dbReference>
<dbReference type="Pfam" id="PF00216">
    <property type="entry name" value="Bac_DNA_binding"/>
    <property type="match status" value="1"/>
</dbReference>
<dbReference type="PRINTS" id="PR01727">
    <property type="entry name" value="DNABINDINGHU"/>
</dbReference>
<dbReference type="SMART" id="SM00411">
    <property type="entry name" value="BHL"/>
    <property type="match status" value="1"/>
</dbReference>
<dbReference type="SUPFAM" id="SSF47729">
    <property type="entry name" value="IHF-like DNA-binding proteins"/>
    <property type="match status" value="1"/>
</dbReference>
<dbReference type="PROSITE" id="PS00045">
    <property type="entry name" value="HISTONE_LIKE"/>
    <property type="match status" value="1"/>
</dbReference>
<proteinExistence type="inferred from homology"/>
<comment type="function">
    <text evidence="1">This protein is one of the two subunits of integration host factor, a specific DNA-binding protein that functions in genetic recombination as well as in transcriptional and translational control.</text>
</comment>
<comment type="subunit">
    <text evidence="1">Heterodimer of an alpha and a beta chain.</text>
</comment>
<comment type="similarity">
    <text evidence="1">Belongs to the bacterial histone-like protein family.</text>
</comment>
<sequence>MTKSELIERIVTHQGQLSSKDVELAIKTMLEQMSQALATGDRIEIRGFGSFSLHYRAPRVGRNPKTGQSVRLDGKFVPHFKPGKELRDRVNEDES</sequence>
<keyword id="KW-0233">DNA recombination</keyword>
<keyword id="KW-0238">DNA-binding</keyword>
<keyword id="KW-0804">Transcription</keyword>
<keyword id="KW-0805">Transcription regulation</keyword>
<keyword id="KW-0810">Translation regulation</keyword>
<reference key="1">
    <citation type="submission" date="2007-04" db="EMBL/GenBank/DDBJ databases">
        <title>Complete sequence of Pseudomonas mendocina ymp.</title>
        <authorList>
            <consortium name="US DOE Joint Genome Institute"/>
            <person name="Copeland A."/>
            <person name="Lucas S."/>
            <person name="Lapidus A."/>
            <person name="Barry K."/>
            <person name="Glavina del Rio T."/>
            <person name="Dalin E."/>
            <person name="Tice H."/>
            <person name="Pitluck S."/>
            <person name="Kiss H."/>
            <person name="Brettin T."/>
            <person name="Detter J.C."/>
            <person name="Bruce D."/>
            <person name="Han C."/>
            <person name="Schmutz J."/>
            <person name="Larimer F."/>
            <person name="Land M."/>
            <person name="Hauser L."/>
            <person name="Kyrpides N."/>
            <person name="Mikhailova N."/>
            <person name="Hersman L."/>
            <person name="Dubois J."/>
            <person name="Maurice P."/>
            <person name="Richardson P."/>
        </authorList>
    </citation>
    <scope>NUCLEOTIDE SEQUENCE [LARGE SCALE GENOMIC DNA]</scope>
    <source>
        <strain>ymp</strain>
    </source>
</reference>
<protein>
    <recommendedName>
        <fullName evidence="1">Integration host factor subunit beta</fullName>
        <shortName evidence="1">IHF-beta</shortName>
    </recommendedName>
</protein>
<gene>
    <name evidence="1" type="primary">ihfB</name>
    <name evidence="1" type="synonym">himD</name>
    <name type="ordered locus">Pmen_1855</name>
</gene>
<evidence type="ECO:0000255" key="1">
    <source>
        <dbReference type="HAMAP-Rule" id="MF_00381"/>
    </source>
</evidence>
<evidence type="ECO:0000256" key="2">
    <source>
        <dbReference type="SAM" id="MobiDB-lite"/>
    </source>
</evidence>